<dbReference type="EMBL" id="AK028580">
    <property type="protein sequence ID" value="BAC26016.1"/>
    <property type="molecule type" value="mRNA"/>
</dbReference>
<dbReference type="EMBL" id="AK031032">
    <property type="protein sequence ID" value="BAC27223.1"/>
    <property type="molecule type" value="mRNA"/>
</dbReference>
<dbReference type="EMBL" id="AK163334">
    <property type="protein sequence ID" value="BAE37305.1"/>
    <property type="molecule type" value="mRNA"/>
</dbReference>
<dbReference type="EMBL" id="AK169375">
    <property type="protein sequence ID" value="BAE41123.1"/>
    <property type="molecule type" value="mRNA"/>
</dbReference>
<dbReference type="EMBL" id="BC092533">
    <property type="protein sequence ID" value="AAH92533.2"/>
    <property type="molecule type" value="mRNA"/>
</dbReference>
<dbReference type="CCDS" id="CCDS38422.2">
    <molecule id="Q8C1A9-1"/>
</dbReference>
<dbReference type="RefSeq" id="NP_080898.2">
    <molecule id="Q8C1A9-1"/>
    <property type="nucleotide sequence ID" value="NM_026622.4"/>
</dbReference>
<dbReference type="RefSeq" id="XP_017175080.1">
    <molecule id="Q8C1A9-1"/>
    <property type="nucleotide sequence ID" value="XM_017319591.2"/>
</dbReference>
<dbReference type="FunCoup" id="Q8C1A9">
    <property type="interactions" value="34"/>
</dbReference>
<dbReference type="STRING" id="10090.ENSMUSP00000103712"/>
<dbReference type="ESTHER" id="mouse-Q8C1A9">
    <property type="family name" value="ABHD18"/>
</dbReference>
<dbReference type="GlyCosmos" id="Q8C1A9">
    <property type="glycosylation" value="1 site, No reported glycans"/>
</dbReference>
<dbReference type="GlyGen" id="Q8C1A9">
    <property type="glycosylation" value="1 site"/>
</dbReference>
<dbReference type="iPTMnet" id="Q8C1A9"/>
<dbReference type="PhosphoSitePlus" id="Q8C1A9"/>
<dbReference type="PaxDb" id="10090-ENSMUSP00000124430"/>
<dbReference type="ProteomicsDB" id="285959">
    <molecule id="Q8C1A9-1"/>
</dbReference>
<dbReference type="ProteomicsDB" id="285960">
    <molecule id="Q8C1A9-2"/>
</dbReference>
<dbReference type="ProteomicsDB" id="285961">
    <molecule id="Q8C1A9-3"/>
</dbReference>
<dbReference type="Antibodypedia" id="64973">
    <property type="antibodies" value="82 antibodies from 17 providers"/>
</dbReference>
<dbReference type="Ensembl" id="ENSMUST00000108078.9">
    <molecule id="Q8C1A9-1"/>
    <property type="protein sequence ID" value="ENSMUSP00000103713.3"/>
    <property type="gene ID" value="ENSMUSG00000037818.18"/>
</dbReference>
<dbReference type="Ensembl" id="ENSMUST00000159774.7">
    <molecule id="Q8C1A9-1"/>
    <property type="protein sequence ID" value="ENSMUSP00000124430.2"/>
    <property type="gene ID" value="ENSMUSG00000037818.18"/>
</dbReference>
<dbReference type="GeneID" id="269423"/>
<dbReference type="KEGG" id="mmu:269423"/>
<dbReference type="UCSC" id="uc008pbw.2">
    <molecule id="Q8C1A9-1"/>
    <property type="organism name" value="mouse"/>
</dbReference>
<dbReference type="UCSC" id="uc008pbz.2">
    <molecule id="Q8C1A9-3"/>
    <property type="organism name" value="mouse"/>
</dbReference>
<dbReference type="AGR" id="MGI:1915468"/>
<dbReference type="CTD" id="80167"/>
<dbReference type="MGI" id="MGI:1915468">
    <property type="gene designation" value="Abhd18"/>
</dbReference>
<dbReference type="VEuPathDB" id="HostDB:ENSMUSG00000037818"/>
<dbReference type="eggNOG" id="KOG1551">
    <property type="taxonomic scope" value="Eukaryota"/>
</dbReference>
<dbReference type="GeneTree" id="ENSGT00390000014635"/>
<dbReference type="HOGENOM" id="CLU_035640_0_0_1"/>
<dbReference type="InParanoid" id="Q8C1A9"/>
<dbReference type="OMA" id="MACLACT"/>
<dbReference type="OrthoDB" id="9987145at2759"/>
<dbReference type="PhylomeDB" id="Q8C1A9"/>
<dbReference type="TreeFam" id="TF314683"/>
<dbReference type="BioGRID-ORCS" id="269423">
    <property type="hits" value="3 hits in 44 CRISPR screens"/>
</dbReference>
<dbReference type="ChiTaRS" id="Abhd18">
    <property type="organism name" value="mouse"/>
</dbReference>
<dbReference type="PRO" id="PR:Q8C1A9"/>
<dbReference type="Proteomes" id="UP000000589">
    <property type="component" value="Chromosome 3"/>
</dbReference>
<dbReference type="RNAct" id="Q8C1A9">
    <property type="molecule type" value="protein"/>
</dbReference>
<dbReference type="Bgee" id="ENSMUSG00000037818">
    <property type="expression patterns" value="Expressed in heart and 64 other cell types or tissues"/>
</dbReference>
<dbReference type="ExpressionAtlas" id="Q8C1A9">
    <property type="expression patterns" value="baseline and differential"/>
</dbReference>
<dbReference type="GO" id="GO:0005576">
    <property type="term" value="C:extracellular region"/>
    <property type="evidence" value="ECO:0007669"/>
    <property type="project" value="UniProtKB-SubCell"/>
</dbReference>
<dbReference type="Gene3D" id="3.40.50.1820">
    <property type="entry name" value="alpha/beta hydrolase"/>
    <property type="match status" value="1"/>
</dbReference>
<dbReference type="InterPro" id="IPR029058">
    <property type="entry name" value="AB_hydrolase_fold"/>
</dbReference>
<dbReference type="InterPro" id="IPR019149">
    <property type="entry name" value="ABHD18"/>
</dbReference>
<dbReference type="PANTHER" id="PTHR13617">
    <property type="entry name" value="PROTEIN ABHD18"/>
    <property type="match status" value="1"/>
</dbReference>
<dbReference type="PANTHER" id="PTHR13617:SF14">
    <property type="entry name" value="PROTEIN ABHD18"/>
    <property type="match status" value="1"/>
</dbReference>
<dbReference type="Pfam" id="PF09752">
    <property type="entry name" value="ABHD18"/>
    <property type="match status" value="1"/>
</dbReference>
<dbReference type="SUPFAM" id="SSF53474">
    <property type="entry name" value="alpha/beta-Hydrolases"/>
    <property type="match status" value="1"/>
</dbReference>
<organism>
    <name type="scientific">Mus musculus</name>
    <name type="common">Mouse</name>
    <dbReference type="NCBI Taxonomy" id="10090"/>
    <lineage>
        <taxon>Eukaryota</taxon>
        <taxon>Metazoa</taxon>
        <taxon>Chordata</taxon>
        <taxon>Craniata</taxon>
        <taxon>Vertebrata</taxon>
        <taxon>Euteleostomi</taxon>
        <taxon>Mammalia</taxon>
        <taxon>Eutheria</taxon>
        <taxon>Euarchontoglires</taxon>
        <taxon>Glires</taxon>
        <taxon>Rodentia</taxon>
        <taxon>Myomorpha</taxon>
        <taxon>Muroidea</taxon>
        <taxon>Muridae</taxon>
        <taxon>Murinae</taxon>
        <taxon>Mus</taxon>
        <taxon>Mus</taxon>
    </lineage>
</organism>
<name>ABD18_MOUSE</name>
<reference key="1">
    <citation type="journal article" date="2005" name="Science">
        <title>The transcriptional landscape of the mammalian genome.</title>
        <authorList>
            <person name="Carninci P."/>
            <person name="Kasukawa T."/>
            <person name="Katayama S."/>
            <person name="Gough J."/>
            <person name="Frith M.C."/>
            <person name="Maeda N."/>
            <person name="Oyama R."/>
            <person name="Ravasi T."/>
            <person name="Lenhard B."/>
            <person name="Wells C."/>
            <person name="Kodzius R."/>
            <person name="Shimokawa K."/>
            <person name="Bajic V.B."/>
            <person name="Brenner S.E."/>
            <person name="Batalov S."/>
            <person name="Forrest A.R."/>
            <person name="Zavolan M."/>
            <person name="Davis M.J."/>
            <person name="Wilming L.G."/>
            <person name="Aidinis V."/>
            <person name="Allen J.E."/>
            <person name="Ambesi-Impiombato A."/>
            <person name="Apweiler R."/>
            <person name="Aturaliya R.N."/>
            <person name="Bailey T.L."/>
            <person name="Bansal M."/>
            <person name="Baxter L."/>
            <person name="Beisel K.W."/>
            <person name="Bersano T."/>
            <person name="Bono H."/>
            <person name="Chalk A.M."/>
            <person name="Chiu K.P."/>
            <person name="Choudhary V."/>
            <person name="Christoffels A."/>
            <person name="Clutterbuck D.R."/>
            <person name="Crowe M.L."/>
            <person name="Dalla E."/>
            <person name="Dalrymple B.P."/>
            <person name="de Bono B."/>
            <person name="Della Gatta G."/>
            <person name="di Bernardo D."/>
            <person name="Down T."/>
            <person name="Engstrom P."/>
            <person name="Fagiolini M."/>
            <person name="Faulkner G."/>
            <person name="Fletcher C.F."/>
            <person name="Fukushima T."/>
            <person name="Furuno M."/>
            <person name="Futaki S."/>
            <person name="Gariboldi M."/>
            <person name="Georgii-Hemming P."/>
            <person name="Gingeras T.R."/>
            <person name="Gojobori T."/>
            <person name="Green R.E."/>
            <person name="Gustincich S."/>
            <person name="Harbers M."/>
            <person name="Hayashi Y."/>
            <person name="Hensch T.K."/>
            <person name="Hirokawa N."/>
            <person name="Hill D."/>
            <person name="Huminiecki L."/>
            <person name="Iacono M."/>
            <person name="Ikeo K."/>
            <person name="Iwama A."/>
            <person name="Ishikawa T."/>
            <person name="Jakt M."/>
            <person name="Kanapin A."/>
            <person name="Katoh M."/>
            <person name="Kawasawa Y."/>
            <person name="Kelso J."/>
            <person name="Kitamura H."/>
            <person name="Kitano H."/>
            <person name="Kollias G."/>
            <person name="Krishnan S.P."/>
            <person name="Kruger A."/>
            <person name="Kummerfeld S.K."/>
            <person name="Kurochkin I.V."/>
            <person name="Lareau L.F."/>
            <person name="Lazarevic D."/>
            <person name="Lipovich L."/>
            <person name="Liu J."/>
            <person name="Liuni S."/>
            <person name="McWilliam S."/>
            <person name="Madan Babu M."/>
            <person name="Madera M."/>
            <person name="Marchionni L."/>
            <person name="Matsuda H."/>
            <person name="Matsuzawa S."/>
            <person name="Miki H."/>
            <person name="Mignone F."/>
            <person name="Miyake S."/>
            <person name="Morris K."/>
            <person name="Mottagui-Tabar S."/>
            <person name="Mulder N."/>
            <person name="Nakano N."/>
            <person name="Nakauchi H."/>
            <person name="Ng P."/>
            <person name="Nilsson R."/>
            <person name="Nishiguchi S."/>
            <person name="Nishikawa S."/>
            <person name="Nori F."/>
            <person name="Ohara O."/>
            <person name="Okazaki Y."/>
            <person name="Orlando V."/>
            <person name="Pang K.C."/>
            <person name="Pavan W.J."/>
            <person name="Pavesi G."/>
            <person name="Pesole G."/>
            <person name="Petrovsky N."/>
            <person name="Piazza S."/>
            <person name="Reed J."/>
            <person name="Reid J.F."/>
            <person name="Ring B.Z."/>
            <person name="Ringwald M."/>
            <person name="Rost B."/>
            <person name="Ruan Y."/>
            <person name="Salzberg S.L."/>
            <person name="Sandelin A."/>
            <person name="Schneider C."/>
            <person name="Schoenbach C."/>
            <person name="Sekiguchi K."/>
            <person name="Semple C.A."/>
            <person name="Seno S."/>
            <person name="Sessa L."/>
            <person name="Sheng Y."/>
            <person name="Shibata Y."/>
            <person name="Shimada H."/>
            <person name="Shimada K."/>
            <person name="Silva D."/>
            <person name="Sinclair B."/>
            <person name="Sperling S."/>
            <person name="Stupka E."/>
            <person name="Sugiura K."/>
            <person name="Sultana R."/>
            <person name="Takenaka Y."/>
            <person name="Taki K."/>
            <person name="Tammoja K."/>
            <person name="Tan S.L."/>
            <person name="Tang S."/>
            <person name="Taylor M.S."/>
            <person name="Tegner J."/>
            <person name="Teichmann S.A."/>
            <person name="Ueda H.R."/>
            <person name="van Nimwegen E."/>
            <person name="Verardo R."/>
            <person name="Wei C.L."/>
            <person name="Yagi K."/>
            <person name="Yamanishi H."/>
            <person name="Zabarovsky E."/>
            <person name="Zhu S."/>
            <person name="Zimmer A."/>
            <person name="Hide W."/>
            <person name="Bult C."/>
            <person name="Grimmond S.M."/>
            <person name="Teasdale R.D."/>
            <person name="Liu E.T."/>
            <person name="Brusic V."/>
            <person name="Quackenbush J."/>
            <person name="Wahlestedt C."/>
            <person name="Mattick J.S."/>
            <person name="Hume D.A."/>
            <person name="Kai C."/>
            <person name="Sasaki D."/>
            <person name="Tomaru Y."/>
            <person name="Fukuda S."/>
            <person name="Kanamori-Katayama M."/>
            <person name="Suzuki M."/>
            <person name="Aoki J."/>
            <person name="Arakawa T."/>
            <person name="Iida J."/>
            <person name="Imamura K."/>
            <person name="Itoh M."/>
            <person name="Kato T."/>
            <person name="Kawaji H."/>
            <person name="Kawagashira N."/>
            <person name="Kawashima T."/>
            <person name="Kojima M."/>
            <person name="Kondo S."/>
            <person name="Konno H."/>
            <person name="Nakano K."/>
            <person name="Ninomiya N."/>
            <person name="Nishio T."/>
            <person name="Okada M."/>
            <person name="Plessy C."/>
            <person name="Shibata K."/>
            <person name="Shiraki T."/>
            <person name="Suzuki S."/>
            <person name="Tagami M."/>
            <person name="Waki K."/>
            <person name="Watahiki A."/>
            <person name="Okamura-Oho Y."/>
            <person name="Suzuki H."/>
            <person name="Kawai J."/>
            <person name="Hayashizaki Y."/>
        </authorList>
    </citation>
    <scope>NUCLEOTIDE SEQUENCE [LARGE SCALE MRNA] (ISOFORMS 1; 2 AND 3)</scope>
    <source>
        <strain>C57BL/6J</strain>
        <tissue>Amnion</tissue>
        <tissue>Egg</tissue>
        <tissue>Skin</tissue>
        <tissue>Thymus</tissue>
    </source>
</reference>
<reference key="2">
    <citation type="journal article" date="2004" name="Genome Res.">
        <title>The status, quality, and expansion of the NIH full-length cDNA project: the Mammalian Gene Collection (MGC).</title>
        <authorList>
            <consortium name="The MGC Project Team"/>
        </authorList>
    </citation>
    <scope>NUCLEOTIDE SEQUENCE [LARGE SCALE MRNA] (ISOFORM 3)</scope>
    <source>
        <tissue>Molar</tissue>
    </source>
</reference>
<gene>
    <name evidence="5" type="primary">Abhd18</name>
</gene>
<feature type="signal peptide" evidence="1">
    <location>
        <begin position="1"/>
        <end position="24"/>
    </location>
</feature>
<feature type="chain" id="PRO_0000301961" description="Protein ABHD18">
    <location>
        <begin position="25"/>
        <end position="464"/>
    </location>
</feature>
<feature type="glycosylation site" description="N-linked (GlcNAc...) asparagine" evidence="1">
    <location>
        <position position="341"/>
    </location>
</feature>
<feature type="splice variant" id="VSP_027895" description="In isoform 3." evidence="2 3">
    <location>
        <begin position="1"/>
        <end position="272"/>
    </location>
</feature>
<feature type="splice variant" id="VSP_027896" description="In isoform 2." evidence="3">
    <location>
        <begin position="1"/>
        <end position="261"/>
    </location>
</feature>
<feature type="sequence conflict" description="In Ref. 1; BAC27223." evidence="4" ref="1">
    <original>L</original>
    <variation>M</variation>
    <location>
        <position position="331"/>
    </location>
</feature>
<protein>
    <recommendedName>
        <fullName evidence="4">Protein ABHD18</fullName>
    </recommendedName>
    <alternativeName>
        <fullName evidence="4">Alpha/beta hydrolase domain-containing protein 18</fullName>
        <shortName evidence="5">Abhydrolase domain-containing protein 18</shortName>
    </alternativeName>
</protein>
<sequence length="464" mass="53168">MGVSKLDILYRRLLLTKLFIRGWGRPEDLKRLFEFRKMIGNRERCQNLVSSDYPVHIDKVEEQSDCKILDGHFVSPMAHYVPGIMPIESVVARFQFIVPKEWNSRYRPVCIHLAGTGDHHYWRRRTLMARPMIKEARMASLLLENPYYGCRKPKDQVRSSLKNVSDLFVMGGALILESAALLHWLEREGYGPLGMTGISMGGHMASLAVSNWPKPMPLIPCLSWSTASGVFTTGVLSKSINWRELEKQYYTQTVYEEEIIHMLEYCGTDSFKMGHEFMNHLPSNADKLTNLNLVSRTLNLDMTDQVVSPKDAKCHKSGKTSISAPSNGQLLQDTAKMECLNQTLSTNKSWFASYNPQSFHLLNREQRRSNRQKESLIFMKGVMDECTHVANFSVPVDPSLIIVVQAKEDAYIPRTGVRSLQEIWPGCEIRYLEGGHISAYLFKQGLFRQAIYDAFERFLHKYAN</sequence>
<proteinExistence type="evidence at transcript level"/>
<evidence type="ECO:0000255" key="1"/>
<evidence type="ECO:0000303" key="2">
    <source>
    </source>
</evidence>
<evidence type="ECO:0000303" key="3">
    <source>
    </source>
</evidence>
<evidence type="ECO:0000305" key="4"/>
<evidence type="ECO:0000312" key="5">
    <source>
        <dbReference type="MGI" id="MGI:1915468"/>
    </source>
</evidence>
<comment type="subcellular location">
    <subcellularLocation>
        <location evidence="4">Secreted</location>
    </subcellularLocation>
</comment>
<comment type="alternative products">
    <event type="alternative splicing"/>
    <isoform>
        <id>Q8C1A9-1</id>
        <name>1</name>
        <sequence type="displayed"/>
    </isoform>
    <isoform>
        <id>Q8C1A9-2</id>
        <name>2</name>
        <sequence type="described" ref="VSP_027896"/>
    </isoform>
    <isoform>
        <id>Q8C1A9-3</id>
        <name>3</name>
        <sequence type="described" ref="VSP_027895"/>
    </isoform>
</comment>
<comment type="similarity">
    <text evidence="4">Belongs to the AB hydrolase superfamily.</text>
</comment>
<accession>Q8C1A9</accession>
<accession>Q3TQS7</accession>
<accession>Q562E0</accession>
<accession>Q8C0I3</accession>
<keyword id="KW-0025">Alternative splicing</keyword>
<keyword id="KW-0325">Glycoprotein</keyword>
<keyword id="KW-1185">Reference proteome</keyword>
<keyword id="KW-0964">Secreted</keyword>
<keyword id="KW-0732">Signal</keyword>